<feature type="signal peptide" evidence="1">
    <location>
        <begin position="1"/>
        <end position="21"/>
    </location>
</feature>
<feature type="chain" id="PRO_0000336661" description="Outer-membrane lipoprotein carrier protein">
    <location>
        <begin position="22"/>
        <end position="203"/>
    </location>
</feature>
<feature type="region of interest" description="Disordered" evidence="2">
    <location>
        <begin position="178"/>
        <end position="203"/>
    </location>
</feature>
<gene>
    <name evidence="1" type="primary">lolA</name>
    <name type="ordered locus">SPA1837</name>
</gene>
<reference key="1">
    <citation type="journal article" date="2004" name="Nat. Genet.">
        <title>Comparison of genome degradation in Paratyphi A and Typhi, human-restricted serovars of Salmonella enterica that cause typhoid.</title>
        <authorList>
            <person name="McClelland M."/>
            <person name="Sanderson K.E."/>
            <person name="Clifton S.W."/>
            <person name="Latreille P."/>
            <person name="Porwollik S."/>
            <person name="Sabo A."/>
            <person name="Meyer R."/>
            <person name="Bieri T."/>
            <person name="Ozersky P."/>
            <person name="McLellan M."/>
            <person name="Harkins C.R."/>
            <person name="Wang C."/>
            <person name="Nguyen C."/>
            <person name="Berghoff A."/>
            <person name="Elliott G."/>
            <person name="Kohlberg S."/>
            <person name="Strong C."/>
            <person name="Du F."/>
            <person name="Carter J."/>
            <person name="Kremizki C."/>
            <person name="Layman D."/>
            <person name="Leonard S."/>
            <person name="Sun H."/>
            <person name="Fulton L."/>
            <person name="Nash W."/>
            <person name="Miner T."/>
            <person name="Minx P."/>
            <person name="Delehaunty K."/>
            <person name="Fronick C."/>
            <person name="Magrini V."/>
            <person name="Nhan M."/>
            <person name="Warren W."/>
            <person name="Florea L."/>
            <person name="Spieth J."/>
            <person name="Wilson R.K."/>
        </authorList>
    </citation>
    <scope>NUCLEOTIDE SEQUENCE [LARGE SCALE GENOMIC DNA]</scope>
    <source>
        <strain>ATCC 9150 / SARB42</strain>
    </source>
</reference>
<dbReference type="EMBL" id="CP000026">
    <property type="protein sequence ID" value="AAV77750.1"/>
    <property type="status" value="ALT_INIT"/>
    <property type="molecule type" value="Genomic_DNA"/>
</dbReference>
<dbReference type="SMR" id="Q5PGI4"/>
<dbReference type="KEGG" id="spt:SPA1837"/>
<dbReference type="HOGENOM" id="CLU_087560_1_1_6"/>
<dbReference type="Proteomes" id="UP000008185">
    <property type="component" value="Chromosome"/>
</dbReference>
<dbReference type="GO" id="GO:0030288">
    <property type="term" value="C:outer membrane-bounded periplasmic space"/>
    <property type="evidence" value="ECO:0007669"/>
    <property type="project" value="TreeGrafter"/>
</dbReference>
<dbReference type="GO" id="GO:0044874">
    <property type="term" value="P:lipoprotein localization to outer membrane"/>
    <property type="evidence" value="ECO:0007669"/>
    <property type="project" value="UniProtKB-UniRule"/>
</dbReference>
<dbReference type="GO" id="GO:0042953">
    <property type="term" value="P:lipoprotein transport"/>
    <property type="evidence" value="ECO:0007669"/>
    <property type="project" value="InterPro"/>
</dbReference>
<dbReference type="CDD" id="cd16325">
    <property type="entry name" value="LolA"/>
    <property type="match status" value="1"/>
</dbReference>
<dbReference type="FunFam" id="2.50.20.10:FF:000001">
    <property type="entry name" value="Outer-membrane lipoprotein carrier protein"/>
    <property type="match status" value="1"/>
</dbReference>
<dbReference type="Gene3D" id="2.50.20.10">
    <property type="entry name" value="Lipoprotein localisation LolA/LolB/LppX"/>
    <property type="match status" value="1"/>
</dbReference>
<dbReference type="HAMAP" id="MF_00240">
    <property type="entry name" value="LolA"/>
    <property type="match status" value="1"/>
</dbReference>
<dbReference type="InterPro" id="IPR029046">
    <property type="entry name" value="LolA/LolB/LppX"/>
</dbReference>
<dbReference type="InterPro" id="IPR004564">
    <property type="entry name" value="OM_lipoprot_carrier_LolA-like"/>
</dbReference>
<dbReference type="InterPro" id="IPR018323">
    <property type="entry name" value="OM_lipoprot_carrier_LolA_Pbac"/>
</dbReference>
<dbReference type="NCBIfam" id="TIGR00547">
    <property type="entry name" value="lolA"/>
    <property type="match status" value="1"/>
</dbReference>
<dbReference type="PANTHER" id="PTHR35869">
    <property type="entry name" value="OUTER-MEMBRANE LIPOPROTEIN CARRIER PROTEIN"/>
    <property type="match status" value="1"/>
</dbReference>
<dbReference type="PANTHER" id="PTHR35869:SF1">
    <property type="entry name" value="OUTER-MEMBRANE LIPOPROTEIN CARRIER PROTEIN"/>
    <property type="match status" value="1"/>
</dbReference>
<dbReference type="Pfam" id="PF03548">
    <property type="entry name" value="LolA"/>
    <property type="match status" value="1"/>
</dbReference>
<dbReference type="SUPFAM" id="SSF89392">
    <property type="entry name" value="Prokaryotic lipoproteins and lipoprotein localization factors"/>
    <property type="match status" value="1"/>
</dbReference>
<evidence type="ECO:0000255" key="1">
    <source>
        <dbReference type="HAMAP-Rule" id="MF_00240"/>
    </source>
</evidence>
<evidence type="ECO:0000256" key="2">
    <source>
        <dbReference type="SAM" id="MobiDB-lite"/>
    </source>
</evidence>
<evidence type="ECO:0000305" key="3"/>
<protein>
    <recommendedName>
        <fullName evidence="1">Outer-membrane lipoprotein carrier protein</fullName>
    </recommendedName>
</protein>
<organism>
    <name type="scientific">Salmonella paratyphi A (strain ATCC 9150 / SARB42)</name>
    <dbReference type="NCBI Taxonomy" id="295319"/>
    <lineage>
        <taxon>Bacteria</taxon>
        <taxon>Pseudomonadati</taxon>
        <taxon>Pseudomonadota</taxon>
        <taxon>Gammaproteobacteria</taxon>
        <taxon>Enterobacterales</taxon>
        <taxon>Enterobacteriaceae</taxon>
        <taxon>Salmonella</taxon>
    </lineage>
</organism>
<name>LOLA_SALPA</name>
<sequence>MKKMAIACALLSSVVASSVWADAVSSLKSRLDKVSSFHATFTQKVTDGSGAAVQEGQGDLWVKRPNLFNWHMTQPDESILVSDGKTLWFYNPFVEQATATWLKDATGNTPFMLIARNQASDWQQYNIKQDGDNFVLTPKASNGNLKQFTINVGRDGTIHQFSAVEQDDQRSAYQLKSQQNGAVDPSKFTFTPPQGVTIDDQRK</sequence>
<keyword id="KW-0143">Chaperone</keyword>
<keyword id="KW-0574">Periplasm</keyword>
<keyword id="KW-0653">Protein transport</keyword>
<keyword id="KW-0732">Signal</keyword>
<keyword id="KW-0813">Transport</keyword>
<proteinExistence type="inferred from homology"/>
<accession>Q5PGI4</accession>
<comment type="function">
    <text evidence="1">Participates in the translocation of lipoproteins from the inner membrane to the outer membrane. Only forms a complex with a lipoprotein if the residue after the N-terminal Cys is not an aspartate (The Asp acts as a targeting signal to indicate that the lipoprotein should stay in the inner membrane).</text>
</comment>
<comment type="subunit">
    <text evidence="1">Monomer.</text>
</comment>
<comment type="subcellular location">
    <subcellularLocation>
        <location evidence="1">Periplasm</location>
    </subcellularLocation>
</comment>
<comment type="similarity">
    <text evidence="1">Belongs to the LolA family.</text>
</comment>
<comment type="sequence caution" evidence="3">
    <conflict type="erroneous initiation">
        <sequence resource="EMBL-CDS" id="AAV77750"/>
    </conflict>
</comment>